<feature type="chain" id="PRO_1000070139" description="Membrane protein insertase YidC">
    <location>
        <begin position="1"/>
        <end position="561"/>
    </location>
</feature>
<feature type="transmembrane region" description="Helical" evidence="1">
    <location>
        <begin position="7"/>
        <end position="27"/>
    </location>
</feature>
<feature type="transmembrane region" description="Helical" evidence="1">
    <location>
        <begin position="342"/>
        <end position="362"/>
    </location>
</feature>
<feature type="transmembrane region" description="Helical" evidence="1">
    <location>
        <begin position="368"/>
        <end position="388"/>
    </location>
</feature>
<feature type="transmembrane region" description="Helical" evidence="1">
    <location>
        <begin position="438"/>
        <end position="458"/>
    </location>
</feature>
<feature type="transmembrane region" description="Helical" evidence="1">
    <location>
        <begin position="469"/>
        <end position="489"/>
    </location>
</feature>
<feature type="transmembrane region" description="Helical" evidence="1">
    <location>
        <begin position="516"/>
        <end position="536"/>
    </location>
</feature>
<proteinExistence type="inferred from homology"/>
<reference key="1">
    <citation type="journal article" date="2006" name="Nat. Biotechnol.">
        <title>Complete genome sequence of the entomopathogenic and metabolically versatile soil bacterium Pseudomonas entomophila.</title>
        <authorList>
            <person name="Vodovar N."/>
            <person name="Vallenet D."/>
            <person name="Cruveiller S."/>
            <person name="Rouy Z."/>
            <person name="Barbe V."/>
            <person name="Acosta C."/>
            <person name="Cattolico L."/>
            <person name="Jubin C."/>
            <person name="Lajus A."/>
            <person name="Segurens B."/>
            <person name="Vacherie B."/>
            <person name="Wincker P."/>
            <person name="Weissenbach J."/>
            <person name="Lemaitre B."/>
            <person name="Medigue C."/>
            <person name="Boccard F."/>
        </authorList>
    </citation>
    <scope>NUCLEOTIDE SEQUENCE [LARGE SCALE GENOMIC DNA]</scope>
    <source>
        <strain>L48</strain>
    </source>
</reference>
<accession>Q1I2H4</accession>
<dbReference type="EMBL" id="CT573326">
    <property type="protein sequence ID" value="CAK18162.1"/>
    <property type="molecule type" value="Genomic_DNA"/>
</dbReference>
<dbReference type="RefSeq" id="WP_011536513.1">
    <property type="nucleotide sequence ID" value="NC_008027.1"/>
</dbReference>
<dbReference type="SMR" id="Q1I2H4"/>
<dbReference type="STRING" id="384676.PSEEN5556"/>
<dbReference type="GeneID" id="32808454"/>
<dbReference type="KEGG" id="pen:PSEEN5556"/>
<dbReference type="eggNOG" id="COG0706">
    <property type="taxonomic scope" value="Bacteria"/>
</dbReference>
<dbReference type="HOGENOM" id="CLU_016535_3_0_6"/>
<dbReference type="OrthoDB" id="9780552at2"/>
<dbReference type="Proteomes" id="UP000000658">
    <property type="component" value="Chromosome"/>
</dbReference>
<dbReference type="GO" id="GO:0005886">
    <property type="term" value="C:plasma membrane"/>
    <property type="evidence" value="ECO:0007669"/>
    <property type="project" value="UniProtKB-SubCell"/>
</dbReference>
<dbReference type="GO" id="GO:0032977">
    <property type="term" value="F:membrane insertase activity"/>
    <property type="evidence" value="ECO:0007669"/>
    <property type="project" value="InterPro"/>
</dbReference>
<dbReference type="GO" id="GO:0051205">
    <property type="term" value="P:protein insertion into membrane"/>
    <property type="evidence" value="ECO:0007669"/>
    <property type="project" value="TreeGrafter"/>
</dbReference>
<dbReference type="GO" id="GO:0015031">
    <property type="term" value="P:protein transport"/>
    <property type="evidence" value="ECO:0007669"/>
    <property type="project" value="UniProtKB-KW"/>
</dbReference>
<dbReference type="CDD" id="cd20070">
    <property type="entry name" value="5TM_YidC_Alb3"/>
    <property type="match status" value="1"/>
</dbReference>
<dbReference type="CDD" id="cd19961">
    <property type="entry name" value="EcYidC-like_peri"/>
    <property type="match status" value="1"/>
</dbReference>
<dbReference type="Gene3D" id="2.70.98.90">
    <property type="match status" value="1"/>
</dbReference>
<dbReference type="HAMAP" id="MF_01810">
    <property type="entry name" value="YidC_type1"/>
    <property type="match status" value="1"/>
</dbReference>
<dbReference type="InterPro" id="IPR019998">
    <property type="entry name" value="Membr_insert_YidC"/>
</dbReference>
<dbReference type="InterPro" id="IPR028053">
    <property type="entry name" value="Membr_insert_YidC_N"/>
</dbReference>
<dbReference type="InterPro" id="IPR001708">
    <property type="entry name" value="YidC/ALB3/OXA1/COX18"/>
</dbReference>
<dbReference type="InterPro" id="IPR028055">
    <property type="entry name" value="YidC/Oxa/ALB_C"/>
</dbReference>
<dbReference type="InterPro" id="IPR047196">
    <property type="entry name" value="YidC_ALB_C"/>
</dbReference>
<dbReference type="InterPro" id="IPR038221">
    <property type="entry name" value="YidC_periplasmic_sf"/>
</dbReference>
<dbReference type="NCBIfam" id="NF002352">
    <property type="entry name" value="PRK01318.1-3"/>
    <property type="match status" value="1"/>
</dbReference>
<dbReference type="NCBIfam" id="NF002353">
    <property type="entry name" value="PRK01318.1-4"/>
    <property type="match status" value="1"/>
</dbReference>
<dbReference type="NCBIfam" id="TIGR03593">
    <property type="entry name" value="yidC_nterm"/>
    <property type="match status" value="1"/>
</dbReference>
<dbReference type="NCBIfam" id="TIGR03592">
    <property type="entry name" value="yidC_oxa1_cterm"/>
    <property type="match status" value="1"/>
</dbReference>
<dbReference type="PANTHER" id="PTHR12428:SF65">
    <property type="entry name" value="CYTOCHROME C OXIDASE ASSEMBLY PROTEIN COX18, MITOCHONDRIAL"/>
    <property type="match status" value="1"/>
</dbReference>
<dbReference type="PANTHER" id="PTHR12428">
    <property type="entry name" value="OXA1"/>
    <property type="match status" value="1"/>
</dbReference>
<dbReference type="Pfam" id="PF02096">
    <property type="entry name" value="60KD_IMP"/>
    <property type="match status" value="1"/>
</dbReference>
<dbReference type="Pfam" id="PF14849">
    <property type="entry name" value="YidC_periplas"/>
    <property type="match status" value="1"/>
</dbReference>
<dbReference type="PRINTS" id="PR00701">
    <property type="entry name" value="60KDINNERMP"/>
</dbReference>
<dbReference type="PRINTS" id="PR01900">
    <property type="entry name" value="YIDCPROTEIN"/>
</dbReference>
<name>YIDC_PSEE4</name>
<comment type="function">
    <text evidence="1">Required for the insertion and/or proper folding and/or complex formation of integral membrane proteins into the membrane. Involved in integration of membrane proteins that insert both dependently and independently of the Sec translocase complex, as well as at least some lipoproteins. Aids folding of multispanning membrane proteins.</text>
</comment>
<comment type="subunit">
    <text evidence="1">Interacts with the Sec translocase complex via SecD. Specifically interacts with transmembrane segments of nascent integral membrane proteins during membrane integration.</text>
</comment>
<comment type="subcellular location">
    <subcellularLocation>
        <location evidence="1">Cell inner membrane</location>
        <topology evidence="1">Multi-pass membrane protein</topology>
    </subcellularLocation>
</comment>
<comment type="similarity">
    <text evidence="1">Belongs to the OXA1/ALB3/YidC family. Type 1 subfamily.</text>
</comment>
<gene>
    <name evidence="1" type="primary">yidC</name>
    <name type="ordered locus">PSEEN5556</name>
</gene>
<evidence type="ECO:0000255" key="1">
    <source>
        <dbReference type="HAMAP-Rule" id="MF_01810"/>
    </source>
</evidence>
<organism>
    <name type="scientific">Pseudomonas entomophila (strain L48)</name>
    <dbReference type="NCBI Taxonomy" id="384676"/>
    <lineage>
        <taxon>Bacteria</taxon>
        <taxon>Pseudomonadati</taxon>
        <taxon>Pseudomonadota</taxon>
        <taxon>Gammaproteobacteria</taxon>
        <taxon>Pseudomonadales</taxon>
        <taxon>Pseudomonadaceae</taxon>
        <taxon>Pseudomonas</taxon>
    </lineage>
</organism>
<sequence length="561" mass="62056">MDIKRTILIVALAIVSYVMVLKWNQDYGQAALPTQNTAASTANASLPDSVPAGNNGANADLPSVNAQNGTTGLAPAPVAVSKDLIQVKTDVLNLAIDPVGGDIVQLTLPKFPRRQDHPEIPFQLFDNGGERVYLAQSGLIGTDGPDRASGRPLYATEQKSYQLADGQDQLVVDLKFSENGVNYIKRFSLKRGEYDLTVSYLIDNQSAQAWSGNMFAQLKRDASSDPSSSTATGTATYLGAALWTASEPYKKVSMKDMDKGGLQENVAGGWVAWLQHYFVTAWIPSKSDNNAVQTRKDSQGNYIIGYTGPALNVPAGGKVETSAMLYAGPKIQSKLKELSPGLELTVDYGFLWFIAQPIFWLLQHIHSLLGNWGWSIIVLTMLIKGLFFPLSAASYRSMARMRAVAPKLAQLKERFGDDRQKMSQAMMELYKKEKINPLGGCLPILVQMPVFLALYWVLLESVEMRQAPWMLWITDLSIKDPFFILPIIMGATMFIQQRLNPTPPDPMQAKVMKMMPIIFTFFFLWFPAGLVLYWVVNNCLSIAQQWYITRSIEAATKKAAA</sequence>
<keyword id="KW-0997">Cell inner membrane</keyword>
<keyword id="KW-1003">Cell membrane</keyword>
<keyword id="KW-0143">Chaperone</keyword>
<keyword id="KW-0472">Membrane</keyword>
<keyword id="KW-0653">Protein transport</keyword>
<keyword id="KW-0812">Transmembrane</keyword>
<keyword id="KW-1133">Transmembrane helix</keyword>
<keyword id="KW-0813">Transport</keyword>
<protein>
    <recommendedName>
        <fullName evidence="1">Membrane protein insertase YidC</fullName>
    </recommendedName>
    <alternativeName>
        <fullName evidence="1">Foldase YidC</fullName>
    </alternativeName>
    <alternativeName>
        <fullName evidence="1">Membrane integrase YidC</fullName>
    </alternativeName>
    <alternativeName>
        <fullName evidence="1">Membrane protein YidC</fullName>
    </alternativeName>
</protein>